<accession>A0A385DT87</accession>
<gene>
    <name evidence="6" type="ORF">crAss001_40</name>
</gene>
<evidence type="ECO:0000256" key="1">
    <source>
        <dbReference type="SAM" id="MobiDB-lite"/>
    </source>
</evidence>
<evidence type="ECO:0000269" key="2">
    <source>
    </source>
</evidence>
<evidence type="ECO:0000303" key="3">
    <source>
    </source>
</evidence>
<evidence type="ECO:0000303" key="4">
    <source>
    </source>
</evidence>
<evidence type="ECO:0000305" key="5">
    <source>
    </source>
</evidence>
<evidence type="ECO:0000312" key="6">
    <source>
        <dbReference type="EMBL" id="AXQ62683.1"/>
    </source>
</evidence>
<evidence type="ECO:0007829" key="7">
    <source>
        <dbReference type="PDB" id="7QOG"/>
    </source>
</evidence>
<evidence type="ECO:0007829" key="8">
    <source>
        <dbReference type="PDB" id="7QOJ"/>
    </source>
</evidence>
<dbReference type="EMBL" id="MH675552">
    <property type="protein sequence ID" value="AXQ62683.1"/>
    <property type="molecule type" value="Genomic_DNA"/>
</dbReference>
<dbReference type="PDB" id="7QOG">
    <property type="method" value="EM"/>
    <property type="resolution" value="3.09 A"/>
    <property type="chains" value="C=1-225"/>
</dbReference>
<dbReference type="PDB" id="7QOI">
    <property type="method" value="EM"/>
    <property type="resolution" value="3.62 A"/>
    <property type="chains" value="FY/FZ/GA/GB/GC/GD/GE/GF/GG/GH/GI/GJ=1-225"/>
</dbReference>
<dbReference type="PDB" id="7QOJ">
    <property type="method" value="EM"/>
    <property type="resolution" value="3.21 A"/>
    <property type="chains" value="C=1-225"/>
</dbReference>
<dbReference type="PDB" id="7QOL">
    <property type="method" value="EM"/>
    <property type="resolution" value="3.33 A"/>
    <property type="chains" value="C/S=1-225"/>
</dbReference>
<dbReference type="PDB" id="8CKB">
    <property type="method" value="EM"/>
    <property type="resolution" value="4.39 A"/>
    <property type="chains" value="K001/K002/K003/K004/K005/K006/K007/K008/K009/K010/K011/RP2012=1-225"/>
</dbReference>
<dbReference type="PDBsum" id="7QOG"/>
<dbReference type="PDBsum" id="7QOI"/>
<dbReference type="PDBsum" id="7QOJ"/>
<dbReference type="PDBsum" id="7QOL"/>
<dbReference type="PDBsum" id="8CKB"/>
<dbReference type="EMDB" id="EMD-14089"/>
<dbReference type="EMDB" id="EMD-14091"/>
<dbReference type="EMDB" id="EMD-14092"/>
<dbReference type="EMDB" id="EMD-14094"/>
<dbReference type="SMR" id="A0A385DT87"/>
<dbReference type="Proteomes" id="UP000262320">
    <property type="component" value="Genome"/>
</dbReference>
<dbReference type="GO" id="GO:0044423">
    <property type="term" value="C:virion component"/>
    <property type="evidence" value="ECO:0007669"/>
    <property type="project" value="UniProtKB-KW"/>
</dbReference>
<sequence>MTYNELIYMVLDELKLSSDDSYYTPDHVIFLLVKYRSFLLKQRYSDIKKQIPDSDYQSICLDLIEVPAISGEPCEGSSYLRSKNKVPTTMMIGNPRVYPMDFYQGEITYISRDRMRYVGYNKFLRNIIYCSKAPDGYLYFKSWNPQFLHLEKVSFNAIFEDAKEASEMACPEENGTICKLEDKEFPIEDALVPPLIELVVKELRGPEYSPKDEDNNAKDDLPDAR</sequence>
<organismHost>
    <name type="scientific">Bacteroides intestinalis</name>
    <dbReference type="NCBI Taxonomy" id="329854"/>
</organismHost>
<organism>
    <name type="scientific">Bacteroides phage crAss001</name>
    <name type="common">Bacteroides phage PhiCrAss001</name>
    <dbReference type="NCBI Taxonomy" id="2301731"/>
    <lineage>
        <taxon>Viruses</taxon>
        <taxon>Duplodnaviria</taxon>
        <taxon>Heunggongvirae</taxon>
        <taxon>Uroviricota</taxon>
        <taxon>Caudoviricetes</taxon>
        <taxon>Crassvirales</taxon>
        <taxon>Steigviridae</taxon>
        <taxon>Asinivirinae</taxon>
        <taxon>Kehishuvirus</taxon>
        <taxon>Kehishuvirus primarius</taxon>
    </lineage>
</organism>
<proteinExistence type="evidence at protein level"/>
<feature type="chain" id="PRO_0000458031" description="Ring protein 2">
    <location>
        <begin position="1"/>
        <end position="225"/>
    </location>
</feature>
<feature type="region of interest" description="Disordered" evidence="1">
    <location>
        <begin position="206"/>
        <end position="225"/>
    </location>
</feature>
<feature type="helix" evidence="7">
    <location>
        <begin position="3"/>
        <end position="14"/>
    </location>
</feature>
<feature type="strand" evidence="8">
    <location>
        <begin position="18"/>
        <end position="20"/>
    </location>
</feature>
<feature type="helix" evidence="7">
    <location>
        <begin position="25"/>
        <end position="44"/>
    </location>
</feature>
<feature type="strand" evidence="7">
    <location>
        <begin position="45"/>
        <end position="47"/>
    </location>
</feature>
<feature type="helix" evidence="7">
    <location>
        <begin position="53"/>
        <end position="55"/>
    </location>
</feature>
<feature type="strand" evidence="7">
    <location>
        <begin position="57"/>
        <end position="66"/>
    </location>
</feature>
<feature type="strand" evidence="7">
    <location>
        <begin position="68"/>
        <end position="71"/>
    </location>
</feature>
<feature type="helix" evidence="7">
    <location>
        <begin position="73"/>
        <end position="75"/>
    </location>
</feature>
<feature type="strand" evidence="7">
    <location>
        <begin position="79"/>
        <end position="84"/>
    </location>
</feature>
<feature type="strand" evidence="7">
    <location>
        <begin position="96"/>
        <end position="100"/>
    </location>
</feature>
<feature type="strand" evidence="7">
    <location>
        <begin position="107"/>
        <end position="109"/>
    </location>
</feature>
<feature type="helix" evidence="7">
    <location>
        <begin position="112"/>
        <end position="115"/>
    </location>
</feature>
<feature type="strand" evidence="7">
    <location>
        <begin position="124"/>
        <end position="126"/>
    </location>
</feature>
<feature type="strand" evidence="7">
    <location>
        <begin position="128"/>
        <end position="132"/>
    </location>
</feature>
<feature type="strand" evidence="7">
    <location>
        <begin position="138"/>
        <end position="141"/>
    </location>
</feature>
<feature type="helix" evidence="7">
    <location>
        <begin position="145"/>
        <end position="149"/>
    </location>
</feature>
<feature type="strand" evidence="7">
    <location>
        <begin position="152"/>
        <end position="157"/>
    </location>
</feature>
<feature type="helix" evidence="7">
    <location>
        <begin position="164"/>
        <end position="167"/>
    </location>
</feature>
<feature type="helix" evidence="7">
    <location>
        <begin position="180"/>
        <end position="182"/>
    </location>
</feature>
<feature type="helix" evidence="8">
    <location>
        <begin position="189"/>
        <end position="191"/>
    </location>
</feature>
<feature type="helix" evidence="7">
    <location>
        <begin position="192"/>
        <end position="207"/>
    </location>
</feature>
<feature type="strand" evidence="7">
    <location>
        <begin position="216"/>
        <end position="218"/>
    </location>
</feature>
<feature type="turn" evidence="7">
    <location>
        <begin position="221"/>
        <end position="224"/>
    </location>
</feature>
<keyword id="KW-0002">3D-structure</keyword>
<keyword id="KW-1185">Reference proteome</keyword>
<keyword id="KW-0946">Virion</keyword>
<comment type="function">
    <text evidence="2">Forms the tail multi-ring barrel with ring protein 1, ring protein 3 and ring protein 4.</text>
</comment>
<comment type="subunit">
    <text evidence="2">Homododecamer.</text>
</comment>
<comment type="subcellular location">
    <subcellularLocation>
        <location evidence="2">Virion</location>
    </subcellularLocation>
    <text evidence="2">Present in 12 copies in the virion tail.</text>
</comment>
<comment type="miscellaneous">
    <text evidence="2 5">The barrel is composed of five stacked dodecameric ring structures (Probable) (PubMed:37138077). Podoviridae-like phages usually possess only one such ring (Probable). The tail is thus rather long (PubMed:37138077).</text>
</comment>
<reference key="1">
    <citation type="journal article" date="2018" name="Nat. Commun.">
        <title>PhiCrAss001 represents the most abundant bacteriophage family in the human gut and infects Bacteroides intestinalis.</title>
        <authorList>
            <person name="Shkoporov A.N."/>
            <person name="Khokhlova E.V."/>
            <person name="Fitzgerald C.B."/>
            <person name="Stockdale S.R."/>
            <person name="Draper L.A."/>
            <person name="Ross R.P."/>
            <person name="Hill C."/>
        </authorList>
    </citation>
    <scope>NUCLEOTIDE SEQUENCE [LARGE SCALE GENOMIC DNA]</scope>
</reference>
<reference key="2">
    <citation type="journal article" date="2023" name="Nature">
        <title>Structural atlas of a human gut crassvirus.</title>
        <authorList>
            <person name="Bayfield O.W."/>
            <person name="Shkoporov A.N."/>
            <person name="Yutin N."/>
            <person name="Khokhlova E.V."/>
            <person name="Smith J.L.R."/>
            <person name="Hawkins D.E.D.P."/>
            <person name="Koonin E.V."/>
            <person name="Hill C."/>
            <person name="Antson A.A."/>
        </authorList>
    </citation>
    <scope>SUBCELLULAR LOCATION</scope>
    <scope>INTERACTION WITH RING PROTEIN 1</scope>
    <scope>INTERACTION WITH RING PROTEIN 3</scope>
</reference>
<protein>
    <recommendedName>
        <fullName evidence="4">Ring protein 2</fullName>
        <shortName evidence="4">R2</shortName>
    </recommendedName>
    <alternativeName>
        <fullName evidence="3">Gene product 40</fullName>
        <shortName evidence="3">gp40</shortName>
    </alternativeName>
</protein>
<name>RING2_BPCA1</name>